<name>CMOA_COLP3</name>
<dbReference type="EC" id="2.1.3.-" evidence="1"/>
<dbReference type="EMBL" id="CP000083">
    <property type="protein sequence ID" value="AAZ28600.1"/>
    <property type="molecule type" value="Genomic_DNA"/>
</dbReference>
<dbReference type="RefSeq" id="WP_011042932.1">
    <property type="nucleotide sequence ID" value="NC_003910.7"/>
</dbReference>
<dbReference type="SMR" id="Q483C9"/>
<dbReference type="STRING" id="167879.CPS_2112"/>
<dbReference type="KEGG" id="cps:CPS_2112"/>
<dbReference type="eggNOG" id="COG2226">
    <property type="taxonomic scope" value="Bacteria"/>
</dbReference>
<dbReference type="HOGENOM" id="CLU_078475_0_0_6"/>
<dbReference type="Proteomes" id="UP000000547">
    <property type="component" value="Chromosome"/>
</dbReference>
<dbReference type="GO" id="GO:0016743">
    <property type="term" value="F:carboxyl- or carbamoyltransferase activity"/>
    <property type="evidence" value="ECO:0007669"/>
    <property type="project" value="UniProtKB-UniRule"/>
</dbReference>
<dbReference type="GO" id="GO:1904047">
    <property type="term" value="F:S-adenosyl-L-methionine binding"/>
    <property type="evidence" value="ECO:0007669"/>
    <property type="project" value="UniProtKB-UniRule"/>
</dbReference>
<dbReference type="GO" id="GO:0002098">
    <property type="term" value="P:tRNA wobble uridine modification"/>
    <property type="evidence" value="ECO:0007669"/>
    <property type="project" value="InterPro"/>
</dbReference>
<dbReference type="CDD" id="cd02440">
    <property type="entry name" value="AdoMet_MTases"/>
    <property type="match status" value="1"/>
</dbReference>
<dbReference type="Gene3D" id="3.40.50.150">
    <property type="entry name" value="Vaccinia Virus protein VP39"/>
    <property type="match status" value="1"/>
</dbReference>
<dbReference type="HAMAP" id="MF_01589">
    <property type="entry name" value="Cx_SAM_synthase"/>
    <property type="match status" value="1"/>
</dbReference>
<dbReference type="InterPro" id="IPR005271">
    <property type="entry name" value="CmoA"/>
</dbReference>
<dbReference type="InterPro" id="IPR041698">
    <property type="entry name" value="Methyltransf_25"/>
</dbReference>
<dbReference type="InterPro" id="IPR029063">
    <property type="entry name" value="SAM-dependent_MTases_sf"/>
</dbReference>
<dbReference type="NCBIfam" id="TIGR00740">
    <property type="entry name" value="carboxy-S-adenosyl-L-methionine synthase CmoA"/>
    <property type="match status" value="1"/>
</dbReference>
<dbReference type="NCBIfam" id="NF011995">
    <property type="entry name" value="PRK15451.1"/>
    <property type="match status" value="1"/>
</dbReference>
<dbReference type="PANTHER" id="PTHR43861:SF2">
    <property type="entry name" value="CARBOXY-S-ADENOSYL-L-METHIONINE SYNTHASE"/>
    <property type="match status" value="1"/>
</dbReference>
<dbReference type="PANTHER" id="PTHR43861">
    <property type="entry name" value="TRANS-ACONITATE 2-METHYLTRANSFERASE-RELATED"/>
    <property type="match status" value="1"/>
</dbReference>
<dbReference type="Pfam" id="PF13649">
    <property type="entry name" value="Methyltransf_25"/>
    <property type="match status" value="1"/>
</dbReference>
<dbReference type="PIRSF" id="PIRSF006325">
    <property type="entry name" value="MeTrfase_bac"/>
    <property type="match status" value="1"/>
</dbReference>
<dbReference type="SUPFAM" id="SSF53335">
    <property type="entry name" value="S-adenosyl-L-methionine-dependent methyltransferases"/>
    <property type="match status" value="1"/>
</dbReference>
<proteinExistence type="inferred from homology"/>
<feature type="chain" id="PRO_0000314321" description="Carboxy-S-adenosyl-L-methionine synthase">
    <location>
        <begin position="1"/>
        <end position="244"/>
    </location>
</feature>
<feature type="binding site" evidence="1">
    <location>
        <position position="41"/>
    </location>
    <ligand>
        <name>S-adenosyl-L-methionine</name>
        <dbReference type="ChEBI" id="CHEBI:59789"/>
    </ligand>
</feature>
<feature type="binding site" evidence="1">
    <location>
        <begin position="66"/>
        <end position="68"/>
    </location>
    <ligand>
        <name>S-adenosyl-L-methionine</name>
        <dbReference type="ChEBI" id="CHEBI:59789"/>
    </ligand>
</feature>
<feature type="binding site" evidence="1">
    <location>
        <begin position="91"/>
        <end position="92"/>
    </location>
    <ligand>
        <name>S-adenosyl-L-methionine</name>
        <dbReference type="ChEBI" id="CHEBI:59789"/>
    </ligand>
</feature>
<feature type="binding site" evidence="1">
    <location>
        <position position="134"/>
    </location>
    <ligand>
        <name>S-adenosyl-L-methionine</name>
        <dbReference type="ChEBI" id="CHEBI:59789"/>
    </ligand>
</feature>
<feature type="binding site" evidence="1">
    <location>
        <position position="201"/>
    </location>
    <ligand>
        <name>S-adenosyl-L-methionine</name>
        <dbReference type="ChEBI" id="CHEBI:59789"/>
    </ligand>
</feature>
<sequence length="244" mass="27314">MHDSDTDLIYSQAHNQVKNFTFDAQVVEVFPDMISRSVPGYKTIIDTIGRLSERFTQDDSNIYDLGCSLGAATLAMRKGITANNCKIIGVDNSIDMVKRCKMHVDAFKGDTPVTIIEGNIQDIDIENASMVVLNFTLQFIEKSQRQALLSKIAQGLKPGGLLVLSEKISSDDNVIDDVLINLHHNFKRDNGYSELEVAQKRSALEKVMLTDSLDVHKERLTQAGFQHVSLWFQCFNFTSLIAIK</sequence>
<accession>Q483C9</accession>
<keyword id="KW-0949">S-adenosyl-L-methionine</keyword>
<keyword id="KW-0808">Transferase</keyword>
<gene>
    <name evidence="1" type="primary">cmoA</name>
    <name type="ordered locus">CPS_2112</name>
</gene>
<organism>
    <name type="scientific">Colwellia psychrerythraea (strain 34H / ATCC BAA-681)</name>
    <name type="common">Vibrio psychroerythus</name>
    <dbReference type="NCBI Taxonomy" id="167879"/>
    <lineage>
        <taxon>Bacteria</taxon>
        <taxon>Pseudomonadati</taxon>
        <taxon>Pseudomonadota</taxon>
        <taxon>Gammaproteobacteria</taxon>
        <taxon>Alteromonadales</taxon>
        <taxon>Colwelliaceae</taxon>
        <taxon>Colwellia</taxon>
    </lineage>
</organism>
<comment type="function">
    <text evidence="1">Catalyzes the conversion of S-adenosyl-L-methionine (SAM) to carboxy-S-adenosyl-L-methionine (Cx-SAM).</text>
</comment>
<comment type="catalytic activity">
    <reaction evidence="1">
        <text>prephenate + S-adenosyl-L-methionine = carboxy-S-adenosyl-L-methionine + 3-phenylpyruvate + H2O</text>
        <dbReference type="Rhea" id="RHEA:51692"/>
        <dbReference type="ChEBI" id="CHEBI:15377"/>
        <dbReference type="ChEBI" id="CHEBI:18005"/>
        <dbReference type="ChEBI" id="CHEBI:29934"/>
        <dbReference type="ChEBI" id="CHEBI:59789"/>
        <dbReference type="ChEBI" id="CHEBI:134278"/>
    </reaction>
</comment>
<comment type="subunit">
    <text evidence="1">Homodimer.</text>
</comment>
<comment type="similarity">
    <text evidence="1">Belongs to the class I-like SAM-binding methyltransferase superfamily. Cx-SAM synthase family.</text>
</comment>
<reference key="1">
    <citation type="journal article" date="2005" name="Proc. Natl. Acad. Sci. U.S.A.">
        <title>The psychrophilic lifestyle as revealed by the genome sequence of Colwellia psychrerythraea 34H through genomic and proteomic analyses.</title>
        <authorList>
            <person name="Methe B.A."/>
            <person name="Nelson K.E."/>
            <person name="Deming J.W."/>
            <person name="Momen B."/>
            <person name="Melamud E."/>
            <person name="Zhang X."/>
            <person name="Moult J."/>
            <person name="Madupu R."/>
            <person name="Nelson W.C."/>
            <person name="Dodson R.J."/>
            <person name="Brinkac L.M."/>
            <person name="Daugherty S.C."/>
            <person name="Durkin A.S."/>
            <person name="DeBoy R.T."/>
            <person name="Kolonay J.F."/>
            <person name="Sullivan S.A."/>
            <person name="Zhou L."/>
            <person name="Davidsen T.M."/>
            <person name="Wu M."/>
            <person name="Huston A.L."/>
            <person name="Lewis M."/>
            <person name="Weaver B."/>
            <person name="Weidman J.F."/>
            <person name="Khouri H."/>
            <person name="Utterback T.R."/>
            <person name="Feldblyum T.V."/>
            <person name="Fraser C.M."/>
        </authorList>
    </citation>
    <scope>NUCLEOTIDE SEQUENCE [LARGE SCALE GENOMIC DNA]</scope>
    <source>
        <strain>34H / ATCC BAA-681</strain>
    </source>
</reference>
<evidence type="ECO:0000255" key="1">
    <source>
        <dbReference type="HAMAP-Rule" id="MF_01589"/>
    </source>
</evidence>
<protein>
    <recommendedName>
        <fullName evidence="1">Carboxy-S-adenosyl-L-methionine synthase</fullName>
        <shortName evidence="1">Cx-SAM synthase</shortName>
        <ecNumber evidence="1">2.1.3.-</ecNumber>
    </recommendedName>
</protein>